<dbReference type="EMBL" id="L77117">
    <property type="protein sequence ID" value="AAB99433.1"/>
    <property type="molecule type" value="Genomic_DNA"/>
</dbReference>
<dbReference type="PIR" id="E64477">
    <property type="entry name" value="E64477"/>
</dbReference>
<dbReference type="SMR" id="Q58817"/>
<dbReference type="FunCoup" id="Q58817">
    <property type="interactions" value="16"/>
</dbReference>
<dbReference type="STRING" id="243232.MJ_1422"/>
<dbReference type="MEROPS" id="N10.007"/>
<dbReference type="PaxDb" id="243232-MJ_1422"/>
<dbReference type="EnsemblBacteria" id="AAB99433">
    <property type="protein sequence ID" value="AAB99433"/>
    <property type="gene ID" value="MJ_1422"/>
</dbReference>
<dbReference type="KEGG" id="mja:MJ_1422"/>
<dbReference type="eggNOG" id="arCOG00469">
    <property type="taxonomic scope" value="Archaea"/>
</dbReference>
<dbReference type="eggNOG" id="arCOG03145">
    <property type="taxonomic scope" value="Archaea"/>
</dbReference>
<dbReference type="eggNOG" id="arCOG03154">
    <property type="taxonomic scope" value="Archaea"/>
</dbReference>
<dbReference type="eggNOG" id="arCOG03158">
    <property type="taxonomic scope" value="Archaea"/>
</dbReference>
<dbReference type="HOGENOM" id="CLU_002046_0_0_2"/>
<dbReference type="InParanoid" id="Q58817"/>
<dbReference type="OrthoDB" id="7928at2157"/>
<dbReference type="PhylomeDB" id="Q58817"/>
<dbReference type="Proteomes" id="UP000000805">
    <property type="component" value="Chromosome"/>
</dbReference>
<dbReference type="GO" id="GO:0005663">
    <property type="term" value="C:DNA replication factor C complex"/>
    <property type="evidence" value="ECO:0000318"/>
    <property type="project" value="GO_Central"/>
</dbReference>
<dbReference type="GO" id="GO:0005524">
    <property type="term" value="F:ATP binding"/>
    <property type="evidence" value="ECO:0007669"/>
    <property type="project" value="UniProtKB-KW"/>
</dbReference>
<dbReference type="GO" id="GO:0003677">
    <property type="term" value="F:DNA binding"/>
    <property type="evidence" value="ECO:0007669"/>
    <property type="project" value="InterPro"/>
</dbReference>
<dbReference type="GO" id="GO:0004519">
    <property type="term" value="F:endonuclease activity"/>
    <property type="evidence" value="ECO:0007669"/>
    <property type="project" value="InterPro"/>
</dbReference>
<dbReference type="GO" id="GO:0006281">
    <property type="term" value="P:DNA repair"/>
    <property type="evidence" value="ECO:0000318"/>
    <property type="project" value="GO_Central"/>
</dbReference>
<dbReference type="GO" id="GO:0006261">
    <property type="term" value="P:DNA-templated DNA replication"/>
    <property type="evidence" value="ECO:0000318"/>
    <property type="project" value="GO_Central"/>
</dbReference>
<dbReference type="GO" id="GO:0016539">
    <property type="term" value="P:intein-mediated protein splicing"/>
    <property type="evidence" value="ECO:0007669"/>
    <property type="project" value="InterPro"/>
</dbReference>
<dbReference type="CDD" id="cd00081">
    <property type="entry name" value="Hint"/>
    <property type="match status" value="3"/>
</dbReference>
<dbReference type="CDD" id="cd18140">
    <property type="entry name" value="HLD_clamp_RFC"/>
    <property type="match status" value="1"/>
</dbReference>
<dbReference type="CDD" id="cd00093">
    <property type="entry name" value="HTH_XRE"/>
    <property type="match status" value="1"/>
</dbReference>
<dbReference type="FunFam" id="1.20.272.10:FF:000029">
    <property type="entry name" value="Replication factor C small subunit"/>
    <property type="match status" value="1"/>
</dbReference>
<dbReference type="FunFam" id="2.170.16.10:FF:000012">
    <property type="entry name" value="Replication factor C small subunit"/>
    <property type="match status" value="1"/>
</dbReference>
<dbReference type="FunFam" id="2.170.16.10:FF:000013">
    <property type="entry name" value="Replication factor C small subunit"/>
    <property type="match status" value="1"/>
</dbReference>
<dbReference type="FunFam" id="2.170.16.10:FF:000021">
    <property type="entry name" value="Replication factor C small subunit"/>
    <property type="match status" value="1"/>
</dbReference>
<dbReference type="FunFam" id="2.170.16.10:FF:000023">
    <property type="entry name" value="Replication factor C small subunit"/>
    <property type="match status" value="1"/>
</dbReference>
<dbReference type="FunFam" id="1.10.8.60:FF:000012">
    <property type="entry name" value="Replication factor C subunit 4"/>
    <property type="match status" value="1"/>
</dbReference>
<dbReference type="FunFam" id="3.10.28.10:FF:000020">
    <property type="entry name" value="tRNA-splicing ligase RtcB"/>
    <property type="match status" value="1"/>
</dbReference>
<dbReference type="Gene3D" id="1.10.8.60">
    <property type="match status" value="1"/>
</dbReference>
<dbReference type="Gene3D" id="1.20.272.10">
    <property type="match status" value="1"/>
</dbReference>
<dbReference type="Gene3D" id="2.170.16.10">
    <property type="entry name" value="Hedgehog/Intein (Hint) domain"/>
    <property type="match status" value="5"/>
</dbReference>
<dbReference type="Gene3D" id="3.10.28.10">
    <property type="entry name" value="Homing endonucleases"/>
    <property type="match status" value="3"/>
</dbReference>
<dbReference type="Gene3D" id="1.10.260.40">
    <property type="entry name" value="lambda repressor-like DNA-binding domains"/>
    <property type="match status" value="1"/>
</dbReference>
<dbReference type="Gene3D" id="3.40.50.300">
    <property type="entry name" value="P-loop containing nucleotide triphosphate hydrolases"/>
    <property type="match status" value="2"/>
</dbReference>
<dbReference type="InterPro" id="IPR001387">
    <property type="entry name" value="Cro/C1-type_HTH"/>
</dbReference>
<dbReference type="InterPro" id="IPR008921">
    <property type="entry name" value="DNA_pol3_clamp-load_cplx_C"/>
</dbReference>
<dbReference type="InterPro" id="IPR050238">
    <property type="entry name" value="DNA_Rep/Repair_Clamp_Loader"/>
</dbReference>
<dbReference type="InterPro" id="IPR003586">
    <property type="entry name" value="Hint_dom_C"/>
</dbReference>
<dbReference type="InterPro" id="IPR003587">
    <property type="entry name" value="Hint_dom_N"/>
</dbReference>
<dbReference type="InterPro" id="IPR036844">
    <property type="entry name" value="Hint_dom_sf"/>
</dbReference>
<dbReference type="InterPro" id="IPR027434">
    <property type="entry name" value="Homing_endonucl"/>
</dbReference>
<dbReference type="InterPro" id="IPR006142">
    <property type="entry name" value="INTEIN"/>
</dbReference>
<dbReference type="InterPro" id="IPR030934">
    <property type="entry name" value="Intein_C"/>
</dbReference>
<dbReference type="InterPro" id="IPR004042">
    <property type="entry name" value="Intein_endonuc_central"/>
</dbReference>
<dbReference type="InterPro" id="IPR006141">
    <property type="entry name" value="Intein_N"/>
</dbReference>
<dbReference type="InterPro" id="IPR004860">
    <property type="entry name" value="LAGLIDADG_dom"/>
</dbReference>
<dbReference type="InterPro" id="IPR010982">
    <property type="entry name" value="Lambda_DNA-bd_dom_sf"/>
</dbReference>
<dbReference type="InterPro" id="IPR027417">
    <property type="entry name" value="P-loop_NTPase"/>
</dbReference>
<dbReference type="InterPro" id="IPR013748">
    <property type="entry name" value="Rep_factorC_C"/>
</dbReference>
<dbReference type="InterPro" id="IPR047854">
    <property type="entry name" value="RFC_lid"/>
</dbReference>
<dbReference type="NCBIfam" id="TIGR01443">
    <property type="entry name" value="intein_Cterm"/>
    <property type="match status" value="3"/>
</dbReference>
<dbReference type="NCBIfam" id="TIGR01445">
    <property type="entry name" value="intein_Nterm"/>
    <property type="match status" value="3"/>
</dbReference>
<dbReference type="NCBIfam" id="NF003157">
    <property type="entry name" value="PRK04132.1-2"/>
    <property type="match status" value="1"/>
</dbReference>
<dbReference type="PANTHER" id="PTHR11669">
    <property type="entry name" value="REPLICATION FACTOR C / DNA POLYMERASE III GAMMA-TAU SUBUNIT"/>
    <property type="match status" value="1"/>
</dbReference>
<dbReference type="PANTHER" id="PTHR11669:SF20">
    <property type="entry name" value="REPLICATION FACTOR C SUBUNIT 4"/>
    <property type="match status" value="1"/>
</dbReference>
<dbReference type="Pfam" id="PF01381">
    <property type="entry name" value="HTH_3"/>
    <property type="match status" value="1"/>
</dbReference>
<dbReference type="Pfam" id="PF14890">
    <property type="entry name" value="Intein_splicing"/>
    <property type="match status" value="3"/>
</dbReference>
<dbReference type="Pfam" id="PF14528">
    <property type="entry name" value="LAGLIDADG_3"/>
    <property type="match status" value="3"/>
</dbReference>
<dbReference type="Pfam" id="PF21960">
    <property type="entry name" value="RCF1-5-like_lid"/>
    <property type="match status" value="1"/>
</dbReference>
<dbReference type="Pfam" id="PF08542">
    <property type="entry name" value="Rep_fac_C"/>
    <property type="match status" value="1"/>
</dbReference>
<dbReference type="PRINTS" id="PR00379">
    <property type="entry name" value="INTEIN"/>
</dbReference>
<dbReference type="SMART" id="SM00305">
    <property type="entry name" value="HintC"/>
    <property type="match status" value="3"/>
</dbReference>
<dbReference type="SMART" id="SM00306">
    <property type="entry name" value="HintN"/>
    <property type="match status" value="3"/>
</dbReference>
<dbReference type="SMART" id="SM00530">
    <property type="entry name" value="HTH_XRE"/>
    <property type="match status" value="1"/>
</dbReference>
<dbReference type="SUPFAM" id="SSF51294">
    <property type="entry name" value="Hedgehog/intein (Hint) domain"/>
    <property type="match status" value="3"/>
</dbReference>
<dbReference type="SUPFAM" id="SSF55608">
    <property type="entry name" value="Homing endonucleases"/>
    <property type="match status" value="3"/>
</dbReference>
<dbReference type="SUPFAM" id="SSF47413">
    <property type="entry name" value="lambda repressor-like DNA-binding domains"/>
    <property type="match status" value="1"/>
</dbReference>
<dbReference type="SUPFAM" id="SSF52540">
    <property type="entry name" value="P-loop containing nucleoside triphosphate hydrolases"/>
    <property type="match status" value="3"/>
</dbReference>
<dbReference type="SUPFAM" id="SSF48019">
    <property type="entry name" value="post-AAA+ oligomerization domain-like"/>
    <property type="match status" value="1"/>
</dbReference>
<dbReference type="PROSITE" id="PS50818">
    <property type="entry name" value="INTEIN_C_TER"/>
    <property type="match status" value="3"/>
</dbReference>
<dbReference type="PROSITE" id="PS50819">
    <property type="entry name" value="INTEIN_ENDONUCLEASE"/>
    <property type="match status" value="3"/>
</dbReference>
<dbReference type="PROSITE" id="PS50817">
    <property type="entry name" value="INTEIN_N_TER"/>
    <property type="match status" value="3"/>
</dbReference>
<name>RFCS_METJA</name>
<feature type="chain" id="PRO_0000030361" description="Replication factor C small subunit, 1st part" evidence="2">
    <location>
        <begin position="1"/>
        <end position="53"/>
    </location>
</feature>
<feature type="chain" id="PRO_0000030362" description="Mja RFC-1 intein" evidence="2">
    <location>
        <begin position="54"/>
        <end position="601"/>
    </location>
</feature>
<feature type="chain" id="PRO_0000030363" description="Replication factor C small subunit, 2nd part" evidence="2">
    <location>
        <begin position="602"/>
        <end position="626"/>
    </location>
</feature>
<feature type="chain" id="PRO_0000030364" description="Mja RFC-2 intein" evidence="2">
    <location>
        <begin position="627"/>
        <end position="1062"/>
    </location>
</feature>
<feature type="chain" id="PRO_0000030365" description="Replication factor C small subunit, 3rd part" evidence="2">
    <location>
        <begin position="1063"/>
        <end position="1124"/>
    </location>
</feature>
<feature type="chain" id="PRO_0000030366" description="Mja RFC-3 intein" evidence="2">
    <location>
        <begin position="1125"/>
        <end position="1667"/>
    </location>
</feature>
<feature type="chain" id="PRO_0000030367" description="Replication factor C small subunit, 4th part" evidence="2">
    <location>
        <begin position="1668"/>
        <end position="1847"/>
    </location>
</feature>
<feature type="domain" description="DOD-type homing endonuclease 1" evidence="3">
    <location>
        <begin position="179"/>
        <end position="311"/>
    </location>
</feature>
<feature type="domain" description="DOD-type homing endonuclease 2" evidence="3">
    <location>
        <begin position="780"/>
        <end position="927"/>
    </location>
</feature>
<feature type="domain" description="DOD-type homing endonuclease 3" evidence="3">
    <location>
        <begin position="1348"/>
        <end position="1508"/>
    </location>
</feature>
<evidence type="ECO:0000250" key="1"/>
<evidence type="ECO:0000255" key="2"/>
<evidence type="ECO:0000255" key="3">
    <source>
        <dbReference type="PROSITE-ProRule" id="PRU00273"/>
    </source>
</evidence>
<evidence type="ECO:0000305" key="4"/>
<gene>
    <name type="primary">rfcS</name>
    <name type="ordered locus">MJ1422</name>
</gene>
<proteinExistence type="inferred from homology"/>
<accession>Q58817</accession>
<reference key="1">
    <citation type="journal article" date="1996" name="Science">
        <title>Complete genome sequence of the methanogenic archaeon, Methanococcus jannaschii.</title>
        <authorList>
            <person name="Bult C.J."/>
            <person name="White O."/>
            <person name="Olsen G.J."/>
            <person name="Zhou L."/>
            <person name="Fleischmann R.D."/>
            <person name="Sutton G.G."/>
            <person name="Blake J.A."/>
            <person name="FitzGerald L.M."/>
            <person name="Clayton R.A."/>
            <person name="Gocayne J.D."/>
            <person name="Kerlavage A.R."/>
            <person name="Dougherty B.A."/>
            <person name="Tomb J.-F."/>
            <person name="Adams M.D."/>
            <person name="Reich C.I."/>
            <person name="Overbeek R."/>
            <person name="Kirkness E.F."/>
            <person name="Weinstock K.G."/>
            <person name="Merrick J.M."/>
            <person name="Glodek A."/>
            <person name="Scott J.L."/>
            <person name="Geoghagen N.S.M."/>
            <person name="Weidman J.F."/>
            <person name="Fuhrmann J.L."/>
            <person name="Nguyen D."/>
            <person name="Utterback T.R."/>
            <person name="Kelley J.M."/>
            <person name="Peterson J.D."/>
            <person name="Sadow P.W."/>
            <person name="Hanna M.C."/>
            <person name="Cotton M.D."/>
            <person name="Roberts K.M."/>
            <person name="Hurst M.A."/>
            <person name="Kaine B.P."/>
            <person name="Borodovsky M."/>
            <person name="Klenk H.-P."/>
            <person name="Fraser C.M."/>
            <person name="Smith H.O."/>
            <person name="Woese C.R."/>
            <person name="Venter J.C."/>
        </authorList>
    </citation>
    <scope>NUCLEOTIDE SEQUENCE [LARGE SCALE GENOMIC DNA]</scope>
    <source>
        <strain>ATCC 43067 / DSM 2661 / JAL-1 / JCM 10045 / NBRC 100440</strain>
    </source>
</reference>
<sequence length="1847" mass="214097">MVIIMEKPWVEKYRPKTLDDIVGQDEIVKRLKKYVEKKSMPHLLFSGPPGVGKCLTGDTKVIVNGEIREIGEVIEEISNGKFGVTLTNNLKVLGIDEDGKIREFDVQYVYKDKTNTLIKIKTKMGRELKVTTYHPLLINHKNGEIKWEKAENLKVGDKLATPRYILFNESDYNEELAEWLGYFIGDGHADKESNKITFTNGDEKLRKRFAELTEKLFKDAKIKERIHKDRTPDIYVNSKEAVEFIDKLGLRGKKADKVRIPKEIMRSDALRAFLRAYFDCDGGIEKHSIVLSTASKEMAEDLVYALLRFGIIAKLREKVNKNNNKVYYHIVISNSSNLRTFLDNIGFSQERKLKKLLEIIKDENPNLDVITIDKEKIRYIRDRLKVKLTRDIEKDNWSYNKCRKITQELLKEIYYRLEELKEIEKALEENILIDWDEVAERRKEIAEKTGIRSDRILEYIRGKRKPSLKNYIKIANTLGKNIEKIIDAMRIFAKKYSSYAEIGKMLNMWNSSIKIYLESNTQEIEKLEEIRKTELKLVKEILNDEKLIDSIGYVLFLASNEIYWDEIVEIEQLNGEFTIYDLHVPRYHNFIGGNLPTILHNTTAALCLARDLFGENWRDNFLELNASVSKDTPILVKIDGKVKRTTFEELDKIYFETNDENEMYKKVDNLEVLTVDENFRVRWRKVSTIIRHKVDKILRIKFEGGYIELTGNHSIMMLDENGLVAKKASDIKVGDCFLSFVANIEGEKDRLDLKEFEPKDITSRVKIINDFDIDEDTAWMLGLYVAEGAVGFKGKTSGQVIYTLGSHEHDLINKLNDIVDKKGFSKYENFTGSGFDRKRLSAKQIRILNTQLARFVEENFYDGNGRRARNKRIPDIIFELKENLRVEFLKGLADGDSSGNWREVVRISSKSDNLLIDTVWLARISGIESSIFENEARLIWKGGMKWKKSNLLPAEPIIKMIKKLENKINGNWRYILRHQLYEGKKRVSKDKIKQILEMVNVEKLSDKEKEVYDLLKKLSKTELYALVVKEIEIIDYNDFVYDVSVPNNEMFFAGNVPILLHNSDERGIDVIRTKVKDFARTKPIGDVPFKIIFLDESDALTADAQNALRRTMEKYSDVCRFILSCLTGDAKITLPDEREIKIEDFIKMFEERKLKHVLNRNGEDLVLAGVKFNSKIVNHKVYRLVLESGREIEATGDHKFLTRDGWKEVYELKEDDEVLVYPALEGVGFEVDERRIIGLNEFYEFLTNYEIKLGYKPLGKAKSYKELITRDKEKILSRVLELSDKYSKSEIRRKIEEEFGIKISLTTIKNLINGKIDGFALKYVRKIKELGWDEITYDDEKAGIFARLLGFIIGDGHLSKSKEGRILITATINELEGIKKDLEKLGIKASNIIEKDIEHKLDGREIKGKTSFIYINNKAFYLLLNFWGVEIGNKTINGYNIPKWIKYGNKFVKREFLRGLFGADGTKPYIKKYNINGIKLGIRVENISKDKTLEFFEEVKKMLEEFEVESYIKVSKIDNKNLTELIVKANNKNYLKYLSRISYAYEKDNFARLVGEYLRIKEAYKDIILKEIAENALKEADGEKSLRELARKYNVPVDFIINQLKGKDIGLPRNFMTFEEFLKEKVVDGKYVSERIIKKECIGYRDVYDITCHKDPSFIANGFVSHNCNYPSKIIPPIQSRCAVFRFSPLKKEDIAKKLKEIAEKEGLNLTESGLEAIIYVSEGDMRKAINVLQTAAALSDVIDDEIVYKVSSRARPEEVKKMMELALDGKFMEARDLLYKLMVEWGMSGEDILNQMFREINSLDIDERKKVELADAIGETDFRIVEGANERIQLSALLAKMALMGR</sequence>
<protein>
    <recommendedName>
        <fullName>Replication factor C small subunit</fullName>
        <shortName>RFC small subunit</shortName>
    </recommendedName>
    <alternativeName>
        <fullName>Clamp loader small subunit</fullName>
    </alternativeName>
    <component>
        <recommendedName>
            <fullName>Mja RFC-1 intein</fullName>
        </recommendedName>
    </component>
    <component>
        <recommendedName>
            <fullName>Mja RFC-2 intein</fullName>
        </recommendedName>
    </component>
    <component>
        <recommendedName>
            <fullName>Mja RFC-3 intein</fullName>
        </recommendedName>
    </component>
</protein>
<organism>
    <name type="scientific">Methanocaldococcus jannaschii (strain ATCC 43067 / DSM 2661 / JAL-1 / JCM 10045 / NBRC 100440)</name>
    <name type="common">Methanococcus jannaschii</name>
    <dbReference type="NCBI Taxonomy" id="243232"/>
    <lineage>
        <taxon>Archaea</taxon>
        <taxon>Methanobacteriati</taxon>
        <taxon>Methanobacteriota</taxon>
        <taxon>Methanomada group</taxon>
        <taxon>Methanococci</taxon>
        <taxon>Methanococcales</taxon>
        <taxon>Methanocaldococcaceae</taxon>
        <taxon>Methanocaldococcus</taxon>
    </lineage>
</organism>
<comment type="function">
    <text evidence="1">Part of the RFC clamp loader complex which loads the PCNA sliding clamp onto DNA.</text>
</comment>
<comment type="subunit">
    <text evidence="1">Heteromultimer composed of small subunits (RfcS) and large subunits (RfcL).</text>
</comment>
<comment type="PTM">
    <text evidence="4">This protein undergoes a protein self splicing that involves a post-translational excision of the intervening region (intein) followed by peptide ligation.</text>
</comment>
<comment type="miscellaneous">
    <text>The intein interrupts the potential ATP-binding site.</text>
</comment>
<comment type="similarity">
    <text evidence="4">Belongs to the activator 1 small subunits family. RfcS subfamily.</text>
</comment>
<keyword id="KW-0067">ATP-binding</keyword>
<keyword id="KW-0068">Autocatalytic cleavage</keyword>
<keyword id="KW-0235">DNA replication</keyword>
<keyword id="KW-0547">Nucleotide-binding</keyword>
<keyword id="KW-0651">Protein splicing</keyword>
<keyword id="KW-1185">Reference proteome</keyword>
<keyword id="KW-0677">Repeat</keyword>